<reference key="1">
    <citation type="submission" date="2008-02" db="EMBL/GenBank/DDBJ databases">
        <title>Complete sequence of chromosome 1 of Burkholderia cenocepacia MC0-3.</title>
        <authorList>
            <person name="Copeland A."/>
            <person name="Lucas S."/>
            <person name="Lapidus A."/>
            <person name="Barry K."/>
            <person name="Bruce D."/>
            <person name="Goodwin L."/>
            <person name="Glavina del Rio T."/>
            <person name="Dalin E."/>
            <person name="Tice H."/>
            <person name="Pitluck S."/>
            <person name="Chain P."/>
            <person name="Malfatti S."/>
            <person name="Shin M."/>
            <person name="Vergez L."/>
            <person name="Schmutz J."/>
            <person name="Larimer F."/>
            <person name="Land M."/>
            <person name="Hauser L."/>
            <person name="Kyrpides N."/>
            <person name="Mikhailova N."/>
            <person name="Tiedje J."/>
            <person name="Richardson P."/>
        </authorList>
    </citation>
    <scope>NUCLEOTIDE SEQUENCE [LARGE SCALE GENOMIC DNA]</scope>
    <source>
        <strain>MC0-3</strain>
    </source>
</reference>
<gene>
    <name evidence="1" type="primary">glnD</name>
    <name type="ordered locus">Bcenmc03_2041</name>
</gene>
<protein>
    <recommendedName>
        <fullName evidence="1">Bifunctional uridylyltransferase/uridylyl-removing enzyme</fullName>
        <shortName evidence="1">UTase/UR</shortName>
    </recommendedName>
    <alternativeName>
        <fullName evidence="1">Bifunctional [protein-PII] modification enzyme</fullName>
    </alternativeName>
    <alternativeName>
        <fullName evidence="1">Bifunctional nitrogen sensor protein</fullName>
    </alternativeName>
    <domain>
        <recommendedName>
            <fullName evidence="1">[Protein-PII] uridylyltransferase</fullName>
            <shortName evidence="1">PII uridylyltransferase</shortName>
            <shortName evidence="1">UTase</shortName>
            <ecNumber evidence="1">2.7.7.59</ecNumber>
        </recommendedName>
    </domain>
    <domain>
        <recommendedName>
            <fullName evidence="1">[Protein-PII]-UMP uridylyl-removing enzyme</fullName>
            <shortName evidence="1">UR</shortName>
            <ecNumber evidence="1">3.1.4.-</ecNumber>
        </recommendedName>
    </domain>
</protein>
<proteinExistence type="inferred from homology"/>
<accession>B1JUF2</accession>
<comment type="function">
    <text evidence="1">Modifies, by uridylylation and deuridylylation, the PII regulatory proteins (GlnB and homologs), in response to the nitrogen status of the cell that GlnD senses through the glutamine level. Under low glutamine levels, catalyzes the conversion of the PII proteins and UTP to PII-UMP and PPi, while under higher glutamine levels, GlnD hydrolyzes PII-UMP to PII and UMP (deuridylylation). Thus, controls uridylylation state and activity of the PII proteins, and plays an important role in the regulation of nitrogen assimilation and metabolism.</text>
</comment>
<comment type="catalytic activity">
    <reaction evidence="1">
        <text>[protein-PII]-L-tyrosine + UTP = [protein-PII]-uridylyl-L-tyrosine + diphosphate</text>
        <dbReference type="Rhea" id="RHEA:13673"/>
        <dbReference type="Rhea" id="RHEA-COMP:12147"/>
        <dbReference type="Rhea" id="RHEA-COMP:12148"/>
        <dbReference type="ChEBI" id="CHEBI:33019"/>
        <dbReference type="ChEBI" id="CHEBI:46398"/>
        <dbReference type="ChEBI" id="CHEBI:46858"/>
        <dbReference type="ChEBI" id="CHEBI:90602"/>
        <dbReference type="EC" id="2.7.7.59"/>
    </reaction>
</comment>
<comment type="catalytic activity">
    <reaction evidence="1">
        <text>[protein-PII]-uridylyl-L-tyrosine + H2O = [protein-PII]-L-tyrosine + UMP + H(+)</text>
        <dbReference type="Rhea" id="RHEA:48600"/>
        <dbReference type="Rhea" id="RHEA-COMP:12147"/>
        <dbReference type="Rhea" id="RHEA-COMP:12148"/>
        <dbReference type="ChEBI" id="CHEBI:15377"/>
        <dbReference type="ChEBI" id="CHEBI:15378"/>
        <dbReference type="ChEBI" id="CHEBI:46858"/>
        <dbReference type="ChEBI" id="CHEBI:57865"/>
        <dbReference type="ChEBI" id="CHEBI:90602"/>
    </reaction>
</comment>
<comment type="cofactor">
    <cofactor evidence="1">
        <name>Mg(2+)</name>
        <dbReference type="ChEBI" id="CHEBI:18420"/>
    </cofactor>
</comment>
<comment type="activity regulation">
    <text evidence="1">Uridylyltransferase (UTase) activity is inhibited by glutamine, while glutamine activates uridylyl-removing (UR) activity.</text>
</comment>
<comment type="domain">
    <text evidence="1">Has four distinct domains: an N-terminal nucleotidyltransferase (NT) domain responsible for UTase activity, a central HD domain that encodes UR activity, and two C-terminal ACT domains that seem to have a role in glutamine sensing.</text>
</comment>
<comment type="similarity">
    <text evidence="1">Belongs to the GlnD family.</text>
</comment>
<sequence>MSAHAAPSPEALSRRAEFKAAKTEMLERFRHAANVASLMHALSKLTDDALKRVWDECGLPATLALVAVGGYGRGELAPYSDVDIVVLLPDAHDAALDARIERFIGMAWDLGLEIGSSVRTVAQCIEEASQDVTVQTSLLEARRIVGSTALFERFTVRYHEALDARAFFTAKVLEMRQRHAKFQDTPYSLEPNVKESPGGLRDLQTILWIARAAGFGSSWRELDTRGLITDREARELRRNEGFLKTLRARLHVIAGRRQDMLVFDLQTQAAESFGYQPTQAKRASEQLMRRYYWAAKAVTQLATILIQNIEAQLFPATSGITRVLSADRFVEKQGMLEIVDDGVFERHPDAILEAFLLYETTRGVKGLSARTLRALYNSREIMNNAWRRDPQNRATFMRILQQPEGITHAFRLMNQTSVLGRYLLNFRRIVGQMQHDLYHVYTVDQHILMVLRNIRRFAVAEHAHEYPFCSQLIGNFERPWALYVAALFHDIAKGRGGDHSTLGMADARRFCREHGIAGDDAALIVWLVQHHLTMSQVAQKQDTSDPEVIKRFAEVVGNERYLTALYLLTVADIRGTSPKVWNTWKGKLLEDLYRITLAVLGGANPDAHSELKSRQEQALALLRLETVPDDAHRALWDQLDVGFFLRHDAADIAWQTRVLYRHVNAETAIVRARPSPIGDALQVLVYVKDRPDLFAGICAYFDRNGLSVLDARVSTTRHGYALDNFIVTQTERDVRYRDIANLVEQQLATRLAETASLPEPSKGRLSRLSRTFPITPRVDLRADERGQYYILSVSANDRPGLLYSIARVLAEHRIGVHAARINTLGERVEDIFLLAGAGLSDNRLQIQLETELLRAIAV</sequence>
<keyword id="KW-0378">Hydrolase</keyword>
<keyword id="KW-0460">Magnesium</keyword>
<keyword id="KW-0511">Multifunctional enzyme</keyword>
<keyword id="KW-0548">Nucleotidyltransferase</keyword>
<keyword id="KW-0677">Repeat</keyword>
<keyword id="KW-0808">Transferase</keyword>
<evidence type="ECO:0000255" key="1">
    <source>
        <dbReference type="HAMAP-Rule" id="MF_00277"/>
    </source>
</evidence>
<evidence type="ECO:0000255" key="2">
    <source>
        <dbReference type="PROSITE-ProRule" id="PRU01175"/>
    </source>
</evidence>
<dbReference type="EC" id="2.7.7.59" evidence="1"/>
<dbReference type="EC" id="3.1.4.-" evidence="1"/>
<dbReference type="EMBL" id="CP000958">
    <property type="protein sequence ID" value="ACA91202.1"/>
    <property type="molecule type" value="Genomic_DNA"/>
</dbReference>
<dbReference type="RefSeq" id="WP_012328761.1">
    <property type="nucleotide sequence ID" value="NC_010508.1"/>
</dbReference>
<dbReference type="SMR" id="B1JUF2"/>
<dbReference type="GeneID" id="83048818"/>
<dbReference type="KEGG" id="bcm:Bcenmc03_2041"/>
<dbReference type="HOGENOM" id="CLU_012833_0_0_4"/>
<dbReference type="Proteomes" id="UP000002169">
    <property type="component" value="Chromosome 1"/>
</dbReference>
<dbReference type="GO" id="GO:0008773">
    <property type="term" value="F:[protein-PII] uridylyltransferase activity"/>
    <property type="evidence" value="ECO:0007669"/>
    <property type="project" value="UniProtKB-UniRule"/>
</dbReference>
<dbReference type="GO" id="GO:0008081">
    <property type="term" value="F:phosphoric diester hydrolase activity"/>
    <property type="evidence" value="ECO:0007669"/>
    <property type="project" value="UniProtKB-UniRule"/>
</dbReference>
<dbReference type="GO" id="GO:0006808">
    <property type="term" value="P:regulation of nitrogen utilization"/>
    <property type="evidence" value="ECO:0007669"/>
    <property type="project" value="UniProtKB-UniRule"/>
</dbReference>
<dbReference type="CDD" id="cd04899">
    <property type="entry name" value="ACT_ACR-UUR-like_2"/>
    <property type="match status" value="1"/>
</dbReference>
<dbReference type="CDD" id="cd04900">
    <property type="entry name" value="ACT_UUR-like_1"/>
    <property type="match status" value="1"/>
</dbReference>
<dbReference type="CDD" id="cd00077">
    <property type="entry name" value="HDc"/>
    <property type="match status" value="1"/>
</dbReference>
<dbReference type="CDD" id="cd05401">
    <property type="entry name" value="NT_GlnE_GlnD_like"/>
    <property type="match status" value="1"/>
</dbReference>
<dbReference type="Gene3D" id="3.30.70.260">
    <property type="match status" value="1"/>
</dbReference>
<dbReference type="Gene3D" id="1.10.3210.10">
    <property type="entry name" value="Hypothetical protein af1432"/>
    <property type="match status" value="1"/>
</dbReference>
<dbReference type="Gene3D" id="1.20.120.330">
    <property type="entry name" value="Nucleotidyltransferases domain 2"/>
    <property type="match status" value="1"/>
</dbReference>
<dbReference type="HAMAP" id="MF_00277">
    <property type="entry name" value="PII_uridylyl_transf"/>
    <property type="match status" value="1"/>
</dbReference>
<dbReference type="InterPro" id="IPR045865">
    <property type="entry name" value="ACT-like_dom_sf"/>
</dbReference>
<dbReference type="InterPro" id="IPR002912">
    <property type="entry name" value="ACT_dom"/>
</dbReference>
<dbReference type="InterPro" id="IPR003607">
    <property type="entry name" value="HD/PDEase_dom"/>
</dbReference>
<dbReference type="InterPro" id="IPR006674">
    <property type="entry name" value="HD_domain"/>
</dbReference>
<dbReference type="InterPro" id="IPR043519">
    <property type="entry name" value="NT_sf"/>
</dbReference>
<dbReference type="InterPro" id="IPR013546">
    <property type="entry name" value="PII_UdlTrfase/GS_AdlTrfase"/>
</dbReference>
<dbReference type="InterPro" id="IPR002934">
    <property type="entry name" value="Polymerase_NTP_transf_dom"/>
</dbReference>
<dbReference type="InterPro" id="IPR010043">
    <property type="entry name" value="UTase/UR"/>
</dbReference>
<dbReference type="NCBIfam" id="NF002837">
    <property type="entry name" value="PRK03059.1"/>
    <property type="match status" value="1"/>
</dbReference>
<dbReference type="NCBIfam" id="TIGR01693">
    <property type="entry name" value="UTase_glnD"/>
    <property type="match status" value="1"/>
</dbReference>
<dbReference type="PANTHER" id="PTHR47320">
    <property type="entry name" value="BIFUNCTIONAL URIDYLYLTRANSFERASE/URIDYLYL-REMOVING ENZYME"/>
    <property type="match status" value="1"/>
</dbReference>
<dbReference type="PANTHER" id="PTHR47320:SF1">
    <property type="entry name" value="BIFUNCTIONAL URIDYLYLTRANSFERASE_URIDYLYL-REMOVING ENZYME"/>
    <property type="match status" value="1"/>
</dbReference>
<dbReference type="Pfam" id="PF08335">
    <property type="entry name" value="GlnD_UR_UTase"/>
    <property type="match status" value="1"/>
</dbReference>
<dbReference type="Pfam" id="PF01966">
    <property type="entry name" value="HD"/>
    <property type="match status" value="1"/>
</dbReference>
<dbReference type="Pfam" id="PF01909">
    <property type="entry name" value="NTP_transf_2"/>
    <property type="match status" value="1"/>
</dbReference>
<dbReference type="PIRSF" id="PIRSF006288">
    <property type="entry name" value="PII_uridyltransf"/>
    <property type="match status" value="1"/>
</dbReference>
<dbReference type="SMART" id="SM00471">
    <property type="entry name" value="HDc"/>
    <property type="match status" value="1"/>
</dbReference>
<dbReference type="SUPFAM" id="SSF55021">
    <property type="entry name" value="ACT-like"/>
    <property type="match status" value="2"/>
</dbReference>
<dbReference type="SUPFAM" id="SSF109604">
    <property type="entry name" value="HD-domain/PDEase-like"/>
    <property type="match status" value="1"/>
</dbReference>
<dbReference type="SUPFAM" id="SSF81301">
    <property type="entry name" value="Nucleotidyltransferase"/>
    <property type="match status" value="1"/>
</dbReference>
<dbReference type="SUPFAM" id="SSF81593">
    <property type="entry name" value="Nucleotidyltransferase substrate binding subunit/domain"/>
    <property type="match status" value="1"/>
</dbReference>
<dbReference type="PROSITE" id="PS51671">
    <property type="entry name" value="ACT"/>
    <property type="match status" value="2"/>
</dbReference>
<dbReference type="PROSITE" id="PS51831">
    <property type="entry name" value="HD"/>
    <property type="match status" value="1"/>
</dbReference>
<feature type="chain" id="PRO_1000114752" description="Bifunctional uridylyltransferase/uridylyl-removing enzyme">
    <location>
        <begin position="1"/>
        <end position="858"/>
    </location>
</feature>
<feature type="domain" description="HD" evidence="2">
    <location>
        <begin position="443"/>
        <end position="565"/>
    </location>
</feature>
<feature type="domain" description="ACT 1" evidence="1">
    <location>
        <begin position="682"/>
        <end position="763"/>
    </location>
</feature>
<feature type="domain" description="ACT 2" evidence="1">
    <location>
        <begin position="790"/>
        <end position="858"/>
    </location>
</feature>
<feature type="region of interest" description="Uridylyltransferase">
    <location>
        <begin position="1"/>
        <end position="324"/>
    </location>
</feature>
<feature type="region of interest" description="Uridylyl-removing">
    <location>
        <begin position="325"/>
        <end position="681"/>
    </location>
</feature>
<name>GLND_BURO0</name>
<organism>
    <name type="scientific">Burkholderia orbicola (strain MC0-3)</name>
    <dbReference type="NCBI Taxonomy" id="406425"/>
    <lineage>
        <taxon>Bacteria</taxon>
        <taxon>Pseudomonadati</taxon>
        <taxon>Pseudomonadota</taxon>
        <taxon>Betaproteobacteria</taxon>
        <taxon>Burkholderiales</taxon>
        <taxon>Burkholderiaceae</taxon>
        <taxon>Burkholderia</taxon>
        <taxon>Burkholderia cepacia complex</taxon>
        <taxon>Burkholderia orbicola</taxon>
    </lineage>
</organism>